<proteinExistence type="inferred from homology"/>
<name>UBIC_PSEA6</name>
<feature type="chain" id="PRO_0000292070" description="Probable chorismate pyruvate-lyase">
    <location>
        <begin position="1"/>
        <end position="192"/>
    </location>
</feature>
<feature type="binding site" evidence="1">
    <location>
        <position position="85"/>
    </location>
    <ligand>
        <name>substrate</name>
    </ligand>
</feature>
<feature type="binding site" evidence="1">
    <location>
        <position position="120"/>
    </location>
    <ligand>
        <name>substrate</name>
    </ligand>
</feature>
<feature type="binding site" evidence="1">
    <location>
        <position position="176"/>
    </location>
    <ligand>
        <name>substrate</name>
    </ligand>
</feature>
<evidence type="ECO:0000255" key="1">
    <source>
        <dbReference type="HAMAP-Rule" id="MF_01632"/>
    </source>
</evidence>
<organism>
    <name type="scientific">Pseudoalteromonas atlantica (strain T6c / ATCC BAA-1087)</name>
    <dbReference type="NCBI Taxonomy" id="3042615"/>
    <lineage>
        <taxon>Bacteria</taxon>
        <taxon>Pseudomonadati</taxon>
        <taxon>Pseudomonadota</taxon>
        <taxon>Gammaproteobacteria</taxon>
        <taxon>Alteromonadales</taxon>
        <taxon>Alteromonadaceae</taxon>
        <taxon>Paraglaciecola</taxon>
    </lineage>
</organism>
<protein>
    <recommendedName>
        <fullName evidence="1">Probable chorismate pyruvate-lyase</fullName>
        <shortName evidence="1">CL</shortName>
        <shortName evidence="1">CPL</shortName>
        <ecNumber evidence="1">4.1.3.40</ecNumber>
    </recommendedName>
</protein>
<accession>Q15ZU0</accession>
<comment type="function">
    <text evidence="1">Removes the pyruvyl group from chorismate, with concomitant aromatization of the ring, to provide 4-hydroxybenzoate (4HB) for the ubiquinone pathway.</text>
</comment>
<comment type="catalytic activity">
    <reaction evidence="1">
        <text>chorismate = 4-hydroxybenzoate + pyruvate</text>
        <dbReference type="Rhea" id="RHEA:16505"/>
        <dbReference type="ChEBI" id="CHEBI:15361"/>
        <dbReference type="ChEBI" id="CHEBI:17879"/>
        <dbReference type="ChEBI" id="CHEBI:29748"/>
        <dbReference type="EC" id="4.1.3.40"/>
    </reaction>
</comment>
<comment type="pathway">
    <text evidence="1">Cofactor biosynthesis; ubiquinone biosynthesis.</text>
</comment>
<comment type="subcellular location">
    <subcellularLocation>
        <location evidence="1">Cytoplasm</location>
    </subcellularLocation>
</comment>
<comment type="similarity">
    <text evidence="1">Belongs to the UbiC family.</text>
</comment>
<keyword id="KW-0963">Cytoplasm</keyword>
<keyword id="KW-0456">Lyase</keyword>
<keyword id="KW-0670">Pyruvate</keyword>
<keyword id="KW-0831">Ubiquinone biosynthesis</keyword>
<reference key="1">
    <citation type="submission" date="2006-06" db="EMBL/GenBank/DDBJ databases">
        <title>Complete sequence of Pseudoalteromonas atlantica T6c.</title>
        <authorList>
            <consortium name="US DOE Joint Genome Institute"/>
            <person name="Copeland A."/>
            <person name="Lucas S."/>
            <person name="Lapidus A."/>
            <person name="Barry K."/>
            <person name="Detter J.C."/>
            <person name="Glavina del Rio T."/>
            <person name="Hammon N."/>
            <person name="Israni S."/>
            <person name="Dalin E."/>
            <person name="Tice H."/>
            <person name="Pitluck S."/>
            <person name="Saunders E."/>
            <person name="Brettin T."/>
            <person name="Bruce D."/>
            <person name="Han C."/>
            <person name="Tapia R."/>
            <person name="Gilna P."/>
            <person name="Schmutz J."/>
            <person name="Larimer F."/>
            <person name="Land M."/>
            <person name="Hauser L."/>
            <person name="Kyrpides N."/>
            <person name="Kim E."/>
            <person name="Karls A.C."/>
            <person name="Bartlett D."/>
            <person name="Higgins B.P."/>
            <person name="Richardson P."/>
        </authorList>
    </citation>
    <scope>NUCLEOTIDE SEQUENCE [LARGE SCALE GENOMIC DNA]</scope>
    <source>
        <strain>T6c / ATCC BAA-1087</strain>
    </source>
</reference>
<dbReference type="EC" id="4.1.3.40" evidence="1"/>
<dbReference type="EMBL" id="CP000388">
    <property type="protein sequence ID" value="ABG38598.1"/>
    <property type="molecule type" value="Genomic_DNA"/>
</dbReference>
<dbReference type="RefSeq" id="WP_011573009.1">
    <property type="nucleotide sequence ID" value="NC_008228.1"/>
</dbReference>
<dbReference type="SMR" id="Q15ZU0"/>
<dbReference type="STRING" id="342610.Patl_0066"/>
<dbReference type="KEGG" id="pat:Patl_0066"/>
<dbReference type="eggNOG" id="COG3161">
    <property type="taxonomic scope" value="Bacteria"/>
</dbReference>
<dbReference type="HOGENOM" id="CLU_096824_3_0_6"/>
<dbReference type="OrthoDB" id="9789493at2"/>
<dbReference type="UniPathway" id="UPA00232"/>
<dbReference type="Proteomes" id="UP000001981">
    <property type="component" value="Chromosome"/>
</dbReference>
<dbReference type="GO" id="GO:0005829">
    <property type="term" value="C:cytosol"/>
    <property type="evidence" value="ECO:0007669"/>
    <property type="project" value="TreeGrafter"/>
</dbReference>
<dbReference type="GO" id="GO:0008813">
    <property type="term" value="F:chorismate lyase activity"/>
    <property type="evidence" value="ECO:0007669"/>
    <property type="project" value="UniProtKB-UniRule"/>
</dbReference>
<dbReference type="GO" id="GO:0042866">
    <property type="term" value="P:pyruvate biosynthetic process"/>
    <property type="evidence" value="ECO:0007669"/>
    <property type="project" value="UniProtKB-UniRule"/>
</dbReference>
<dbReference type="GO" id="GO:0006744">
    <property type="term" value="P:ubiquinone biosynthetic process"/>
    <property type="evidence" value="ECO:0007669"/>
    <property type="project" value="UniProtKB-UniRule"/>
</dbReference>
<dbReference type="Gene3D" id="3.40.1410.10">
    <property type="entry name" value="Chorismate lyase-like"/>
    <property type="match status" value="1"/>
</dbReference>
<dbReference type="HAMAP" id="MF_01632">
    <property type="entry name" value="UbiC"/>
    <property type="match status" value="1"/>
</dbReference>
<dbReference type="InterPro" id="IPR007440">
    <property type="entry name" value="Chorismate--pyruvate_lyase"/>
</dbReference>
<dbReference type="InterPro" id="IPR028978">
    <property type="entry name" value="Chorismate_lyase_/UTRA_dom_sf"/>
</dbReference>
<dbReference type="PANTHER" id="PTHR38683">
    <property type="entry name" value="CHORISMATE PYRUVATE-LYASE"/>
    <property type="match status" value="1"/>
</dbReference>
<dbReference type="PANTHER" id="PTHR38683:SF1">
    <property type="entry name" value="CHORISMATE PYRUVATE-LYASE"/>
    <property type="match status" value="1"/>
</dbReference>
<dbReference type="Pfam" id="PF04345">
    <property type="entry name" value="Chor_lyase"/>
    <property type="match status" value="1"/>
</dbReference>
<dbReference type="SUPFAM" id="SSF64288">
    <property type="entry name" value="Chorismate lyase-like"/>
    <property type="match status" value="1"/>
</dbReference>
<gene>
    <name evidence="1" type="primary">ubiC</name>
    <name type="ordered locus">Patl_0066</name>
</gene>
<sequence length="192" mass="22297">MQKTISHAFPLGDVTWSNQGRLSIPNAHLESWLLNTGSLTQRLQTRCNDFKVQLVSQRQELATPAEYIQLGVSKMSQQKENWQVREVILHGDNQPWVFARSIIPQALCEADFLELGDKPLGHLIFNDDRFKRQPFQLMCLQPDEAFLHEYGLPPLTEIWGRRSVFCYQQYAMMVAELFLPKAPAYRDSNFDR</sequence>